<keyword id="KW-0456">Lyase</keyword>
<keyword id="KW-1185">Reference proteome</keyword>
<sequence>MTECFLSDQEIRKLNRDLRILIAANGTLTRVLNIVADDEVIVQIVKQRIHDVSPKLSEFEQLGQVGVGRVLQRYIILKGRNSEHLFVAAESLIAIDRLPAAIITRLTQTNDPLGEVMAASHIETFKEEAKVWVGDLPGWLALHGYQNSRKRAVARRYRVISGGQPIMVVTEHFLRSVFRDAPHEEPDRWQFSNAITLAR</sequence>
<accession>Q7TXK6</accession>
<accession>A0A1R3Y4M7</accession>
<accession>X2BMN6</accession>
<comment type="function">
    <text evidence="1">Removes the pyruvyl group from chorismate to provide 4-hydroxybenzoate (4HB). Involved in the synthesis of glycosylated p-hydroxybenzoic acid methyl esters (p-HBADs) and phenolic glycolipids (PGL) that play important roles in the pathogenesis of mycobacterial infections (By similarity).</text>
</comment>
<comment type="catalytic activity">
    <reaction>
        <text>chorismate = 4-hydroxybenzoate + pyruvate</text>
        <dbReference type="Rhea" id="RHEA:16505"/>
        <dbReference type="ChEBI" id="CHEBI:15361"/>
        <dbReference type="ChEBI" id="CHEBI:17879"/>
        <dbReference type="ChEBI" id="CHEBI:29748"/>
        <dbReference type="EC" id="4.1.3.40"/>
    </reaction>
</comment>
<comment type="similarity">
    <text evidence="2">Belongs to the chorismate pyruvate-lyase type 2 family.</text>
</comment>
<proteinExistence type="inferred from homology"/>
<gene>
    <name type="ordered locus">BQ2027_MB2973C</name>
</gene>
<organism>
    <name type="scientific">Mycobacterium bovis (strain ATCC BAA-935 / AF2122/97)</name>
    <dbReference type="NCBI Taxonomy" id="233413"/>
    <lineage>
        <taxon>Bacteria</taxon>
        <taxon>Bacillati</taxon>
        <taxon>Actinomycetota</taxon>
        <taxon>Actinomycetes</taxon>
        <taxon>Mycobacteriales</taxon>
        <taxon>Mycobacteriaceae</taxon>
        <taxon>Mycobacterium</taxon>
        <taxon>Mycobacterium tuberculosis complex</taxon>
    </lineage>
</organism>
<dbReference type="EC" id="4.1.3.40"/>
<dbReference type="EMBL" id="LT708304">
    <property type="protein sequence ID" value="SIU01595.1"/>
    <property type="molecule type" value="Genomic_DNA"/>
</dbReference>
<dbReference type="RefSeq" id="NP_856618.1">
    <property type="nucleotide sequence ID" value="NC_002945.3"/>
</dbReference>
<dbReference type="RefSeq" id="WP_003414887.1">
    <property type="nucleotide sequence ID" value="NC_002945.4"/>
</dbReference>
<dbReference type="SMR" id="Q7TXK6"/>
<dbReference type="KEGG" id="mbo:BQ2027_MB2973C"/>
<dbReference type="PATRIC" id="fig|233413.5.peg.3265"/>
<dbReference type="BioCyc" id="MetaCyc:MONOMER-19636"/>
<dbReference type="Proteomes" id="UP000001419">
    <property type="component" value="Chromosome"/>
</dbReference>
<dbReference type="GO" id="GO:0008813">
    <property type="term" value="F:chorismate lyase activity"/>
    <property type="evidence" value="ECO:0007669"/>
    <property type="project" value="UniProtKB-EC"/>
</dbReference>
<dbReference type="FunFam" id="3.40.1410.10:FF:000020">
    <property type="entry name" value="Chorismate pyruvate-lyase"/>
    <property type="match status" value="1"/>
</dbReference>
<dbReference type="Gene3D" id="3.40.1410.10">
    <property type="entry name" value="Chorismate lyase-like"/>
    <property type="match status" value="1"/>
</dbReference>
<dbReference type="InterPro" id="IPR028978">
    <property type="entry name" value="Chorismate_lyase_/UTRA_dom_sf"/>
</dbReference>
<dbReference type="InterPro" id="IPR002800">
    <property type="entry name" value="Rv2949c-like"/>
</dbReference>
<dbReference type="Pfam" id="PF01947">
    <property type="entry name" value="Rv2949c-like"/>
    <property type="match status" value="1"/>
</dbReference>
<dbReference type="SUPFAM" id="SSF64288">
    <property type="entry name" value="Chorismate lyase-like"/>
    <property type="match status" value="1"/>
</dbReference>
<name>PHBS_MYCBO</name>
<protein>
    <recommendedName>
        <fullName>Chorismate pyruvate-lyase</fullName>
        <ecNumber>4.1.3.40</ecNumber>
    </recommendedName>
    <alternativeName>
        <fullName>4-HB synthase</fullName>
    </alternativeName>
    <alternativeName>
        <fullName>p-hydroxybenzoic acid synthase</fullName>
    </alternativeName>
</protein>
<evidence type="ECO:0000250" key="1"/>
<evidence type="ECO:0000305" key="2"/>
<reference key="1">
    <citation type="journal article" date="2003" name="Proc. Natl. Acad. Sci. U.S.A.">
        <title>The complete genome sequence of Mycobacterium bovis.</title>
        <authorList>
            <person name="Garnier T."/>
            <person name="Eiglmeier K."/>
            <person name="Camus J.-C."/>
            <person name="Medina N."/>
            <person name="Mansoor H."/>
            <person name="Pryor M."/>
            <person name="Duthoy S."/>
            <person name="Grondin S."/>
            <person name="Lacroix C."/>
            <person name="Monsempe C."/>
            <person name="Simon S."/>
            <person name="Harris B."/>
            <person name="Atkin R."/>
            <person name="Doggett J."/>
            <person name="Mayes R."/>
            <person name="Keating L."/>
            <person name="Wheeler P.R."/>
            <person name="Parkhill J."/>
            <person name="Barrell B.G."/>
            <person name="Cole S.T."/>
            <person name="Gordon S.V."/>
            <person name="Hewinson R.G."/>
        </authorList>
    </citation>
    <scope>NUCLEOTIDE SEQUENCE [LARGE SCALE GENOMIC DNA]</scope>
    <source>
        <strain>ATCC BAA-935 / AF2122/97</strain>
    </source>
</reference>
<reference key="2">
    <citation type="journal article" date="2017" name="Genome Announc.">
        <title>Updated reference genome sequence and annotation of Mycobacterium bovis AF2122/97.</title>
        <authorList>
            <person name="Malone K.M."/>
            <person name="Farrell D."/>
            <person name="Stuber T.P."/>
            <person name="Schubert O.T."/>
            <person name="Aebersold R."/>
            <person name="Robbe-Austerman S."/>
            <person name="Gordon S.V."/>
        </authorList>
    </citation>
    <scope>NUCLEOTIDE SEQUENCE [LARGE SCALE GENOMIC DNA]</scope>
    <scope>GENOME REANNOTATION</scope>
    <source>
        <strain>ATCC BAA-935 / AF2122/97</strain>
    </source>
</reference>
<feature type="chain" id="PRO_0000240508" description="Chorismate pyruvate-lyase">
    <location>
        <begin position="1"/>
        <end position="199"/>
    </location>
</feature>